<evidence type="ECO:0000255" key="1">
    <source>
        <dbReference type="HAMAP-Rule" id="MF_00385"/>
    </source>
</evidence>
<evidence type="ECO:0000305" key="2"/>
<evidence type="ECO:0007829" key="3">
    <source>
        <dbReference type="PDB" id="7BGD"/>
    </source>
</evidence>
<evidence type="ECO:0007829" key="4">
    <source>
        <dbReference type="PDB" id="8BYV"/>
    </source>
</evidence>
<protein>
    <recommendedName>
        <fullName evidence="1">Small ribosomal subunit protein bS16</fullName>
    </recommendedName>
    <alternativeName>
        <fullName evidence="2">30S ribosomal protein S16</fullName>
    </alternativeName>
</protein>
<proteinExistence type="evidence at protein level"/>
<name>RS16_STAA8</name>
<reference key="1">
    <citation type="book" date="2006" name="Gram positive pathogens, 2nd edition">
        <title>The Staphylococcus aureus NCTC 8325 genome.</title>
        <editorList>
            <person name="Fischetti V."/>
            <person name="Novick R."/>
            <person name="Ferretti J."/>
            <person name="Portnoy D."/>
            <person name="Rood J."/>
        </editorList>
        <authorList>
            <person name="Gillaspy A.F."/>
            <person name="Worrell V."/>
            <person name="Orvis J."/>
            <person name="Roe B.A."/>
            <person name="Dyer D.W."/>
            <person name="Iandolo J.J."/>
        </authorList>
    </citation>
    <scope>NUCLEOTIDE SEQUENCE [LARGE SCALE GENOMIC DNA]</scope>
    <source>
        <strain>NCTC 8325 / PS 47</strain>
    </source>
</reference>
<comment type="similarity">
    <text evidence="1">Belongs to the bacterial ribosomal protein bS16 family.</text>
</comment>
<keyword id="KW-0002">3D-structure</keyword>
<keyword id="KW-1185">Reference proteome</keyword>
<keyword id="KW-0687">Ribonucleoprotein</keyword>
<keyword id="KW-0689">Ribosomal protein</keyword>
<dbReference type="EMBL" id="CP000253">
    <property type="protein sequence ID" value="ABD30313.1"/>
    <property type="molecule type" value="Genomic_DNA"/>
</dbReference>
<dbReference type="RefSeq" id="WP_000268754.1">
    <property type="nucleotide sequence ID" value="NZ_LS483365.1"/>
</dbReference>
<dbReference type="RefSeq" id="YP_499745.1">
    <property type="nucleotide sequence ID" value="NC_007795.1"/>
</dbReference>
<dbReference type="PDB" id="5LI0">
    <property type="method" value="EM"/>
    <property type="resolution" value="3.80 A"/>
    <property type="chains" value="p=2-91"/>
</dbReference>
<dbReference type="PDB" id="5ND8">
    <property type="method" value="EM"/>
    <property type="resolution" value="3.70 A"/>
    <property type="chains" value="p=1-91"/>
</dbReference>
<dbReference type="PDB" id="5ND9">
    <property type="method" value="EM"/>
    <property type="resolution" value="3.70 A"/>
    <property type="chains" value="p=1-91"/>
</dbReference>
<dbReference type="PDB" id="5TCU">
    <property type="method" value="EM"/>
    <property type="resolution" value="3.90 A"/>
    <property type="chains" value="S7=2-84"/>
</dbReference>
<dbReference type="PDB" id="6YEF">
    <property type="method" value="EM"/>
    <property type="resolution" value="3.20 A"/>
    <property type="chains" value="p=1-91"/>
</dbReference>
<dbReference type="PDB" id="7BGD">
    <property type="method" value="EM"/>
    <property type="resolution" value="3.20 A"/>
    <property type="chains" value="p=1-91"/>
</dbReference>
<dbReference type="PDB" id="7KWG">
    <property type="method" value="EM"/>
    <property type="resolution" value="3.75 A"/>
    <property type="chains" value="p=1-91"/>
</dbReference>
<dbReference type="PDB" id="7NHL">
    <property type="method" value="EM"/>
    <property type="resolution" value="3.10 A"/>
    <property type="chains" value="q=1-91"/>
</dbReference>
<dbReference type="PDB" id="7NHM">
    <property type="method" value="EM"/>
    <property type="resolution" value="3.10 A"/>
    <property type="chains" value="q=1-91"/>
</dbReference>
<dbReference type="PDB" id="8BH6">
    <property type="method" value="EM"/>
    <property type="resolution" value="3.70 A"/>
    <property type="chains" value="p=1-91"/>
</dbReference>
<dbReference type="PDB" id="8BH7">
    <property type="method" value="EM"/>
    <property type="resolution" value="4.23 A"/>
    <property type="chains" value="p=1-91"/>
</dbReference>
<dbReference type="PDB" id="8BYV">
    <property type="method" value="EM"/>
    <property type="resolution" value="2.89 A"/>
    <property type="chains" value="p=1-91"/>
</dbReference>
<dbReference type="PDB" id="8P2F">
    <property type="method" value="EM"/>
    <property type="resolution" value="2.44 A"/>
    <property type="chains" value="q=1-91"/>
</dbReference>
<dbReference type="PDB" id="8P2G">
    <property type="method" value="EM"/>
    <property type="resolution" value="2.02 A"/>
    <property type="chains" value="q=1-91"/>
</dbReference>
<dbReference type="PDB" id="8P2H">
    <property type="method" value="EM"/>
    <property type="resolution" value="2.49 A"/>
    <property type="chains" value="q=1-91"/>
</dbReference>
<dbReference type="PDBsum" id="5LI0"/>
<dbReference type="PDBsum" id="5ND8"/>
<dbReference type="PDBsum" id="5ND9"/>
<dbReference type="PDBsum" id="5TCU"/>
<dbReference type="PDBsum" id="6YEF"/>
<dbReference type="PDBsum" id="7BGD"/>
<dbReference type="PDBsum" id="7KWG"/>
<dbReference type="PDBsum" id="7NHL"/>
<dbReference type="PDBsum" id="7NHM"/>
<dbReference type="PDBsum" id="8BH6"/>
<dbReference type="PDBsum" id="8BH7"/>
<dbReference type="PDBsum" id="8BYV"/>
<dbReference type="PDBsum" id="8P2F"/>
<dbReference type="PDBsum" id="8P2G"/>
<dbReference type="PDBsum" id="8P2H"/>
<dbReference type="EMDB" id="EMD-10791"/>
<dbReference type="EMDB" id="EMD-12178"/>
<dbReference type="EMDB" id="EMD-12332"/>
<dbReference type="EMDB" id="EMD-12333"/>
<dbReference type="EMDB" id="EMD-16048"/>
<dbReference type="EMDB" id="EMD-16049"/>
<dbReference type="EMDB" id="EMD-16334"/>
<dbReference type="EMDB" id="EMD-17363"/>
<dbReference type="EMDB" id="EMD-17364"/>
<dbReference type="EMDB" id="EMD-17365"/>
<dbReference type="EMDB" id="EMD-23052"/>
<dbReference type="EMDB" id="EMD-3624"/>
<dbReference type="EMDB" id="EMD-3625"/>
<dbReference type="EMDB" id="EMD-4050"/>
<dbReference type="EMDB" id="EMD-8402"/>
<dbReference type="SMR" id="Q2FZ45"/>
<dbReference type="IntAct" id="Q2FZ45">
    <property type="interactions" value="1"/>
</dbReference>
<dbReference type="STRING" id="93061.SAOUHSC_01208"/>
<dbReference type="PaxDb" id="1280-SAXN108_1239"/>
<dbReference type="GeneID" id="3919474"/>
<dbReference type="GeneID" id="66839430"/>
<dbReference type="KEGG" id="sao:SAOUHSC_01208"/>
<dbReference type="PATRIC" id="fig|93061.5.peg.1108"/>
<dbReference type="eggNOG" id="COG0228">
    <property type="taxonomic scope" value="Bacteria"/>
</dbReference>
<dbReference type="HOGENOM" id="CLU_100590_5_0_9"/>
<dbReference type="OrthoDB" id="9807878at2"/>
<dbReference type="PRO" id="PR:Q2FZ45"/>
<dbReference type="Proteomes" id="UP000008816">
    <property type="component" value="Chromosome"/>
</dbReference>
<dbReference type="GO" id="GO:0005737">
    <property type="term" value="C:cytoplasm"/>
    <property type="evidence" value="ECO:0007669"/>
    <property type="project" value="UniProtKB-ARBA"/>
</dbReference>
<dbReference type="GO" id="GO:0015935">
    <property type="term" value="C:small ribosomal subunit"/>
    <property type="evidence" value="ECO:0000318"/>
    <property type="project" value="GO_Central"/>
</dbReference>
<dbReference type="GO" id="GO:0003735">
    <property type="term" value="F:structural constituent of ribosome"/>
    <property type="evidence" value="ECO:0000318"/>
    <property type="project" value="GO_Central"/>
</dbReference>
<dbReference type="GO" id="GO:0006412">
    <property type="term" value="P:translation"/>
    <property type="evidence" value="ECO:0007669"/>
    <property type="project" value="UniProtKB-UniRule"/>
</dbReference>
<dbReference type="FunFam" id="3.30.1320.10:FF:000002">
    <property type="entry name" value="30S ribosomal protein S16"/>
    <property type="match status" value="1"/>
</dbReference>
<dbReference type="Gene3D" id="3.30.1320.10">
    <property type="match status" value="1"/>
</dbReference>
<dbReference type="HAMAP" id="MF_00385">
    <property type="entry name" value="Ribosomal_bS16"/>
    <property type="match status" value="1"/>
</dbReference>
<dbReference type="InterPro" id="IPR000307">
    <property type="entry name" value="Ribosomal_bS16"/>
</dbReference>
<dbReference type="InterPro" id="IPR023803">
    <property type="entry name" value="Ribosomal_bS16_dom_sf"/>
</dbReference>
<dbReference type="NCBIfam" id="TIGR00002">
    <property type="entry name" value="S16"/>
    <property type="match status" value="1"/>
</dbReference>
<dbReference type="PANTHER" id="PTHR12919">
    <property type="entry name" value="30S RIBOSOMAL PROTEIN S16"/>
    <property type="match status" value="1"/>
</dbReference>
<dbReference type="PANTHER" id="PTHR12919:SF20">
    <property type="entry name" value="SMALL RIBOSOMAL SUBUNIT PROTEIN BS16M"/>
    <property type="match status" value="1"/>
</dbReference>
<dbReference type="Pfam" id="PF00886">
    <property type="entry name" value="Ribosomal_S16"/>
    <property type="match status" value="1"/>
</dbReference>
<dbReference type="SUPFAM" id="SSF54565">
    <property type="entry name" value="Ribosomal protein S16"/>
    <property type="match status" value="1"/>
</dbReference>
<accession>Q2FZ45</accession>
<organism>
    <name type="scientific">Staphylococcus aureus (strain NCTC 8325 / PS 47)</name>
    <dbReference type="NCBI Taxonomy" id="93061"/>
    <lineage>
        <taxon>Bacteria</taxon>
        <taxon>Bacillati</taxon>
        <taxon>Bacillota</taxon>
        <taxon>Bacilli</taxon>
        <taxon>Bacillales</taxon>
        <taxon>Staphylococcaceae</taxon>
        <taxon>Staphylococcus</taxon>
    </lineage>
</organism>
<sequence length="91" mass="10235">MAVKIRLTRLGSKRNPFYRIVVADARSPRDGRIIEQIGTYNPTSANAPEIKVDEALALKWLNDGAKPTDTVHNILSKEGIMKKFDEQKKAK</sequence>
<gene>
    <name evidence="1" type="primary">rpsP</name>
    <name type="ordered locus">SAOUHSC_01208</name>
</gene>
<feature type="chain" id="PRO_1000049357" description="Small ribosomal subunit protein bS16">
    <location>
        <begin position="1"/>
        <end position="91"/>
    </location>
</feature>
<feature type="strand" evidence="4">
    <location>
        <begin position="3"/>
        <end position="9"/>
    </location>
</feature>
<feature type="strand" evidence="4">
    <location>
        <begin position="13"/>
        <end position="15"/>
    </location>
</feature>
<feature type="strand" evidence="4">
    <location>
        <begin position="18"/>
        <end position="24"/>
    </location>
</feature>
<feature type="strand" evidence="4">
    <location>
        <begin position="29"/>
        <end position="31"/>
    </location>
</feature>
<feature type="strand" evidence="4">
    <location>
        <begin position="34"/>
        <end position="36"/>
    </location>
</feature>
<feature type="strand" evidence="3">
    <location>
        <begin position="49"/>
        <end position="51"/>
    </location>
</feature>
<feature type="helix" evidence="4">
    <location>
        <begin position="56"/>
        <end position="63"/>
    </location>
</feature>
<feature type="helix" evidence="4">
    <location>
        <begin position="69"/>
        <end position="78"/>
    </location>
</feature>
<feature type="helix" evidence="4">
    <location>
        <begin position="80"/>
        <end position="88"/>
    </location>
</feature>